<evidence type="ECO:0000255" key="1">
    <source>
        <dbReference type="HAMAP-Rule" id="MF_00679"/>
    </source>
</evidence>
<organism>
    <name type="scientific">Rickettsia africae (strain ESF-5)</name>
    <dbReference type="NCBI Taxonomy" id="347255"/>
    <lineage>
        <taxon>Bacteria</taxon>
        <taxon>Pseudomonadati</taxon>
        <taxon>Pseudomonadota</taxon>
        <taxon>Alphaproteobacteria</taxon>
        <taxon>Rickettsiales</taxon>
        <taxon>Rickettsiaceae</taxon>
        <taxon>Rickettsieae</taxon>
        <taxon>Rickettsia</taxon>
        <taxon>spotted fever group</taxon>
    </lineage>
</organism>
<accession>C3PMP2</accession>
<dbReference type="EMBL" id="CP001612">
    <property type="protein sequence ID" value="ACP53202.1"/>
    <property type="molecule type" value="Genomic_DNA"/>
</dbReference>
<dbReference type="RefSeq" id="WP_012719465.1">
    <property type="nucleotide sequence ID" value="NC_012633.1"/>
</dbReference>
<dbReference type="SMR" id="C3PMP2"/>
<dbReference type="KEGG" id="raf:RAF_ORF0245"/>
<dbReference type="HOGENOM" id="CLU_005965_2_4_5"/>
<dbReference type="Proteomes" id="UP000002305">
    <property type="component" value="Chromosome"/>
</dbReference>
<dbReference type="GO" id="GO:0005524">
    <property type="term" value="F:ATP binding"/>
    <property type="evidence" value="ECO:0007669"/>
    <property type="project" value="UniProtKB-KW"/>
</dbReference>
<dbReference type="GO" id="GO:0016887">
    <property type="term" value="F:ATP hydrolysis activity"/>
    <property type="evidence" value="ECO:0007669"/>
    <property type="project" value="UniProtKB-UniRule"/>
</dbReference>
<dbReference type="GO" id="GO:0140662">
    <property type="term" value="F:ATP-dependent protein folding chaperone"/>
    <property type="evidence" value="ECO:0007669"/>
    <property type="project" value="InterPro"/>
</dbReference>
<dbReference type="GO" id="GO:0051082">
    <property type="term" value="F:unfolded protein binding"/>
    <property type="evidence" value="ECO:0007669"/>
    <property type="project" value="InterPro"/>
</dbReference>
<dbReference type="GO" id="GO:0016226">
    <property type="term" value="P:iron-sulfur cluster assembly"/>
    <property type="evidence" value="ECO:0007669"/>
    <property type="project" value="InterPro"/>
</dbReference>
<dbReference type="Gene3D" id="1.20.1270.10">
    <property type="match status" value="1"/>
</dbReference>
<dbReference type="Gene3D" id="3.30.420.40">
    <property type="match status" value="2"/>
</dbReference>
<dbReference type="Gene3D" id="3.90.640.10">
    <property type="entry name" value="Actin, Chain A, domain 4"/>
    <property type="match status" value="1"/>
</dbReference>
<dbReference type="Gene3D" id="2.60.34.10">
    <property type="entry name" value="Substrate Binding Domain Of DNAk, Chain A, domain 1"/>
    <property type="match status" value="1"/>
</dbReference>
<dbReference type="HAMAP" id="MF_00679">
    <property type="entry name" value="HscA"/>
    <property type="match status" value="1"/>
</dbReference>
<dbReference type="InterPro" id="IPR043129">
    <property type="entry name" value="ATPase_NBD"/>
</dbReference>
<dbReference type="InterPro" id="IPR018181">
    <property type="entry name" value="Heat_shock_70_CS"/>
</dbReference>
<dbReference type="InterPro" id="IPR029048">
    <property type="entry name" value="HSP70_C_sf"/>
</dbReference>
<dbReference type="InterPro" id="IPR029047">
    <property type="entry name" value="HSP70_peptide-bd_sf"/>
</dbReference>
<dbReference type="InterPro" id="IPR013126">
    <property type="entry name" value="Hsp_70_fam"/>
</dbReference>
<dbReference type="InterPro" id="IPR010236">
    <property type="entry name" value="ISC_FeS_clus_asmbl_HscA"/>
</dbReference>
<dbReference type="NCBIfam" id="NF002399">
    <property type="entry name" value="PRK01433.1"/>
    <property type="match status" value="1"/>
</dbReference>
<dbReference type="PANTHER" id="PTHR19375">
    <property type="entry name" value="HEAT SHOCK PROTEIN 70KDA"/>
    <property type="match status" value="1"/>
</dbReference>
<dbReference type="Pfam" id="PF00012">
    <property type="entry name" value="HSP70"/>
    <property type="match status" value="1"/>
</dbReference>
<dbReference type="PRINTS" id="PR00301">
    <property type="entry name" value="HEATSHOCK70"/>
</dbReference>
<dbReference type="SUPFAM" id="SSF53067">
    <property type="entry name" value="Actin-like ATPase domain"/>
    <property type="match status" value="2"/>
</dbReference>
<dbReference type="SUPFAM" id="SSF100934">
    <property type="entry name" value="Heat shock protein 70kD (HSP70), C-terminal subdomain"/>
    <property type="match status" value="1"/>
</dbReference>
<dbReference type="SUPFAM" id="SSF100920">
    <property type="entry name" value="Heat shock protein 70kD (HSP70), peptide-binding domain"/>
    <property type="match status" value="1"/>
</dbReference>
<dbReference type="PROSITE" id="PS00329">
    <property type="entry name" value="HSP70_2"/>
    <property type="match status" value="1"/>
</dbReference>
<dbReference type="PROSITE" id="PS01036">
    <property type="entry name" value="HSP70_3"/>
    <property type="match status" value="1"/>
</dbReference>
<name>HSCA_RICAE</name>
<keyword id="KW-0067">ATP-binding</keyword>
<keyword id="KW-0143">Chaperone</keyword>
<keyword id="KW-0547">Nucleotide-binding</keyword>
<keyword id="KW-0346">Stress response</keyword>
<comment type="function">
    <text evidence="1">Chaperone involved in the maturation of iron-sulfur cluster-containing proteins. Has a low intrinsic ATPase activity which is markedly stimulated by HscB.</text>
</comment>
<comment type="similarity">
    <text evidence="1">Belongs to the heat shock protein 70 family.</text>
</comment>
<feature type="chain" id="PRO_1000212532" description="Chaperone protein HscA homolog">
    <location>
        <begin position="1"/>
        <end position="595"/>
    </location>
</feature>
<sequence>MQIIEIREPEQADFKQERQIAVGIDFGTTNSLIAIAANRQVKVIKSIDDKELIPTTIDFTSNNFTIGNNKGLRSIKRLFGKTLKEILNTPALFSLVKDYLDVNSSELKLNFANKQLRVPEIAAEIFIYLKNQAEEQLKTNLTKAVITVPAHFNDAARGEVMLAAKIAGFEVLRLIAEPTAAAYAYGLNKNQKGCYLVYDLGGGTFDVSILNIQEGIFQVIATNGDNMLGGNDIDVVITQYLCNKFDLPNSIDTLQLAKKAKETLTYKDSFNNDNVSINKQTLEQLILPLVERTINIAQECLEQAGNPNIDGVILVGGATRIPLIKDELYKAFKIDILSDIDPDKAVVWGAALQAENLIAPHTNSLLIDVAPLSLGMELYGGIVEKIIMHNTPIPISVVKEFTTYVDNQTGIQFHILQGEREMAADCRSLARFELKGLPPMKAGYIRAEVTFSIDADGILSVSAYEKISNTSHAIEVKPNHGIDKTEIDIMLENAYKNAKIDYTTRLLQEAVIEAEALIFSIERAIAELTTLSSESEISIINSLLDNIKEAVHARDWILINNSIKEFKSKIKKSIDTKFNIIINDLLKGKNINQIK</sequence>
<proteinExistence type="inferred from homology"/>
<protein>
    <recommendedName>
        <fullName evidence="1">Chaperone protein HscA homolog</fullName>
    </recommendedName>
</protein>
<reference key="1">
    <citation type="journal article" date="2009" name="BMC Genomics">
        <title>Analysis of the Rickettsia africae genome reveals that virulence acquisition in Rickettsia species may be explained by genome reduction.</title>
        <authorList>
            <person name="Fournier P.-E."/>
            <person name="El Karkouri K."/>
            <person name="Leroy Q."/>
            <person name="Robert C."/>
            <person name="Giumelli B."/>
            <person name="Renesto P."/>
            <person name="Socolovschi C."/>
            <person name="Parola P."/>
            <person name="Audic S."/>
            <person name="Raoult D."/>
        </authorList>
    </citation>
    <scope>NUCLEOTIDE SEQUENCE [LARGE SCALE GENOMIC DNA]</scope>
    <source>
        <strain>ESF-5</strain>
    </source>
</reference>
<gene>
    <name evidence="1" type="primary">hscA</name>
    <name type="ordered locus">RAF_ORF0245</name>
</gene>